<proteinExistence type="inferred from homology"/>
<protein>
    <recommendedName>
        <fullName evidence="1">Serine hydroxymethyltransferase</fullName>
        <shortName evidence="1">SHMT</shortName>
        <shortName evidence="1">Serine methylase</shortName>
        <ecNumber evidence="1">2.1.2.1</ecNumber>
    </recommendedName>
</protein>
<accession>B0CL90</accession>
<keyword id="KW-0028">Amino-acid biosynthesis</keyword>
<keyword id="KW-0963">Cytoplasm</keyword>
<keyword id="KW-0554">One-carbon metabolism</keyword>
<keyword id="KW-0663">Pyridoxal phosphate</keyword>
<keyword id="KW-0808">Transferase</keyword>
<organism>
    <name type="scientific">Brucella suis (strain ATCC 23445 / NCTC 10510)</name>
    <dbReference type="NCBI Taxonomy" id="470137"/>
    <lineage>
        <taxon>Bacteria</taxon>
        <taxon>Pseudomonadati</taxon>
        <taxon>Pseudomonadota</taxon>
        <taxon>Alphaproteobacteria</taxon>
        <taxon>Hyphomicrobiales</taxon>
        <taxon>Brucellaceae</taxon>
        <taxon>Brucella/Ochrobactrum group</taxon>
        <taxon>Brucella</taxon>
    </lineage>
</organism>
<evidence type="ECO:0000255" key="1">
    <source>
        <dbReference type="HAMAP-Rule" id="MF_00051"/>
    </source>
</evidence>
<name>GLYA_BRUSI</name>
<comment type="function">
    <text evidence="1">Catalyzes the reversible interconversion of serine and glycine with tetrahydrofolate (THF) serving as the one-carbon carrier. This reaction serves as the major source of one-carbon groups required for the biosynthesis of purines, thymidylate, methionine, and other important biomolecules. Also exhibits THF-independent aldolase activity toward beta-hydroxyamino acids, producing glycine and aldehydes, via a retro-aldol mechanism.</text>
</comment>
<comment type="catalytic activity">
    <reaction evidence="1">
        <text>(6R)-5,10-methylene-5,6,7,8-tetrahydrofolate + glycine + H2O = (6S)-5,6,7,8-tetrahydrofolate + L-serine</text>
        <dbReference type="Rhea" id="RHEA:15481"/>
        <dbReference type="ChEBI" id="CHEBI:15377"/>
        <dbReference type="ChEBI" id="CHEBI:15636"/>
        <dbReference type="ChEBI" id="CHEBI:33384"/>
        <dbReference type="ChEBI" id="CHEBI:57305"/>
        <dbReference type="ChEBI" id="CHEBI:57453"/>
        <dbReference type="EC" id="2.1.2.1"/>
    </reaction>
</comment>
<comment type="cofactor">
    <cofactor evidence="1">
        <name>pyridoxal 5'-phosphate</name>
        <dbReference type="ChEBI" id="CHEBI:597326"/>
    </cofactor>
</comment>
<comment type="pathway">
    <text evidence="1">One-carbon metabolism; tetrahydrofolate interconversion.</text>
</comment>
<comment type="pathway">
    <text evidence="1">Amino-acid biosynthesis; glycine biosynthesis; glycine from L-serine: step 1/1.</text>
</comment>
<comment type="subunit">
    <text evidence="1">Homodimer.</text>
</comment>
<comment type="subcellular location">
    <subcellularLocation>
        <location evidence="1">Cytoplasm</location>
    </subcellularLocation>
</comment>
<comment type="similarity">
    <text evidence="1">Belongs to the SHMT family.</text>
</comment>
<dbReference type="EC" id="2.1.2.1" evidence="1"/>
<dbReference type="EMBL" id="CP000911">
    <property type="protein sequence ID" value="ABY37870.1"/>
    <property type="molecule type" value="Genomic_DNA"/>
</dbReference>
<dbReference type="RefSeq" id="WP_006195459.1">
    <property type="nucleotide sequence ID" value="NC_010169.1"/>
</dbReference>
<dbReference type="SMR" id="B0CL90"/>
<dbReference type="KEGG" id="bmt:BSUIS_A0799"/>
<dbReference type="HOGENOM" id="CLU_022477_2_1_5"/>
<dbReference type="UniPathway" id="UPA00193"/>
<dbReference type="UniPathway" id="UPA00288">
    <property type="reaction ID" value="UER01023"/>
</dbReference>
<dbReference type="PRO" id="PR:B0CL90"/>
<dbReference type="Proteomes" id="UP000008545">
    <property type="component" value="Chromosome I"/>
</dbReference>
<dbReference type="GO" id="GO:0005829">
    <property type="term" value="C:cytosol"/>
    <property type="evidence" value="ECO:0007669"/>
    <property type="project" value="TreeGrafter"/>
</dbReference>
<dbReference type="GO" id="GO:0004372">
    <property type="term" value="F:glycine hydroxymethyltransferase activity"/>
    <property type="evidence" value="ECO:0007669"/>
    <property type="project" value="UniProtKB-UniRule"/>
</dbReference>
<dbReference type="GO" id="GO:0030170">
    <property type="term" value="F:pyridoxal phosphate binding"/>
    <property type="evidence" value="ECO:0007669"/>
    <property type="project" value="UniProtKB-UniRule"/>
</dbReference>
<dbReference type="GO" id="GO:0019264">
    <property type="term" value="P:glycine biosynthetic process from serine"/>
    <property type="evidence" value="ECO:0007669"/>
    <property type="project" value="UniProtKB-UniRule"/>
</dbReference>
<dbReference type="GO" id="GO:0035999">
    <property type="term" value="P:tetrahydrofolate interconversion"/>
    <property type="evidence" value="ECO:0007669"/>
    <property type="project" value="UniProtKB-UniRule"/>
</dbReference>
<dbReference type="CDD" id="cd00378">
    <property type="entry name" value="SHMT"/>
    <property type="match status" value="1"/>
</dbReference>
<dbReference type="FunFam" id="3.40.640.10:FF:000001">
    <property type="entry name" value="Serine hydroxymethyltransferase"/>
    <property type="match status" value="1"/>
</dbReference>
<dbReference type="FunFam" id="3.90.1150.10:FF:000003">
    <property type="entry name" value="Serine hydroxymethyltransferase"/>
    <property type="match status" value="1"/>
</dbReference>
<dbReference type="Gene3D" id="3.90.1150.10">
    <property type="entry name" value="Aspartate Aminotransferase, domain 1"/>
    <property type="match status" value="1"/>
</dbReference>
<dbReference type="Gene3D" id="3.40.640.10">
    <property type="entry name" value="Type I PLP-dependent aspartate aminotransferase-like (Major domain)"/>
    <property type="match status" value="1"/>
</dbReference>
<dbReference type="HAMAP" id="MF_00051">
    <property type="entry name" value="SHMT"/>
    <property type="match status" value="1"/>
</dbReference>
<dbReference type="InterPro" id="IPR015424">
    <property type="entry name" value="PyrdxlP-dep_Trfase"/>
</dbReference>
<dbReference type="InterPro" id="IPR015421">
    <property type="entry name" value="PyrdxlP-dep_Trfase_major"/>
</dbReference>
<dbReference type="InterPro" id="IPR015422">
    <property type="entry name" value="PyrdxlP-dep_Trfase_small"/>
</dbReference>
<dbReference type="InterPro" id="IPR001085">
    <property type="entry name" value="Ser_HO-MeTrfase"/>
</dbReference>
<dbReference type="InterPro" id="IPR049943">
    <property type="entry name" value="Ser_HO-MeTrfase-like"/>
</dbReference>
<dbReference type="InterPro" id="IPR019798">
    <property type="entry name" value="Ser_HO-MeTrfase_PLP_BS"/>
</dbReference>
<dbReference type="InterPro" id="IPR039429">
    <property type="entry name" value="SHMT-like_dom"/>
</dbReference>
<dbReference type="NCBIfam" id="NF000586">
    <property type="entry name" value="PRK00011.1"/>
    <property type="match status" value="1"/>
</dbReference>
<dbReference type="PANTHER" id="PTHR11680">
    <property type="entry name" value="SERINE HYDROXYMETHYLTRANSFERASE"/>
    <property type="match status" value="1"/>
</dbReference>
<dbReference type="PANTHER" id="PTHR11680:SF35">
    <property type="entry name" value="SERINE HYDROXYMETHYLTRANSFERASE 1"/>
    <property type="match status" value="1"/>
</dbReference>
<dbReference type="Pfam" id="PF00464">
    <property type="entry name" value="SHMT"/>
    <property type="match status" value="1"/>
</dbReference>
<dbReference type="PIRSF" id="PIRSF000412">
    <property type="entry name" value="SHMT"/>
    <property type="match status" value="1"/>
</dbReference>
<dbReference type="SUPFAM" id="SSF53383">
    <property type="entry name" value="PLP-dependent transferases"/>
    <property type="match status" value="1"/>
</dbReference>
<dbReference type="PROSITE" id="PS00096">
    <property type="entry name" value="SHMT"/>
    <property type="match status" value="1"/>
</dbReference>
<feature type="chain" id="PRO_1000074889" description="Serine hydroxymethyltransferase">
    <location>
        <begin position="1"/>
        <end position="438"/>
    </location>
</feature>
<feature type="binding site" evidence="1">
    <location>
        <position position="133"/>
    </location>
    <ligand>
        <name>(6S)-5,6,7,8-tetrahydrofolate</name>
        <dbReference type="ChEBI" id="CHEBI:57453"/>
    </ligand>
</feature>
<feature type="binding site" evidence="1">
    <location>
        <begin position="137"/>
        <end position="139"/>
    </location>
    <ligand>
        <name>(6S)-5,6,7,8-tetrahydrofolate</name>
        <dbReference type="ChEBI" id="CHEBI:57453"/>
    </ligand>
</feature>
<feature type="site" description="Plays an important role in substrate specificity" evidence="1">
    <location>
        <position position="241"/>
    </location>
</feature>
<feature type="modified residue" description="N6-(pyridoxal phosphate)lysine" evidence="1">
    <location>
        <position position="242"/>
    </location>
</feature>
<reference key="1">
    <citation type="submission" date="2007-12" db="EMBL/GenBank/DDBJ databases">
        <title>Brucella suis ATCC 23445 whole genome shotgun sequencing project.</title>
        <authorList>
            <person name="Setubal J.C."/>
            <person name="Bowns C."/>
            <person name="Boyle S."/>
            <person name="Crasta O.R."/>
            <person name="Czar M.J."/>
            <person name="Dharmanolla C."/>
            <person name="Gillespie J.J."/>
            <person name="Kenyon R.W."/>
            <person name="Lu J."/>
            <person name="Mane S."/>
            <person name="Mohapatra S."/>
            <person name="Nagrani S."/>
            <person name="Purkayastha A."/>
            <person name="Rajasimha H.K."/>
            <person name="Shallom J.M."/>
            <person name="Shallom S."/>
            <person name="Shukla M."/>
            <person name="Snyder E.E."/>
            <person name="Sobral B.W."/>
            <person name="Wattam A.R."/>
            <person name="Will R."/>
            <person name="Williams K."/>
            <person name="Yoo H."/>
            <person name="Bruce D."/>
            <person name="Detter C."/>
            <person name="Munk C."/>
            <person name="Brettin T.S."/>
        </authorList>
    </citation>
    <scope>NUCLEOTIDE SEQUENCE [LARGE SCALE GENOMIC DNA]</scope>
    <source>
        <strain>ATCC 23445 / NCTC 10510</strain>
    </source>
</reference>
<sequence length="438" mass="46966">MSQANAATKASSDVFFNASLEDIDPEIFGAIRNELGRQRHEIGLIASENIVSRAVLEAQGSILTNKYAEGYPGKRYYGGGQYVDVVEELAIERAKKLFGAEFANVQPNSGSQMNQAVFLALLQPGDTFMGLDLNSGGHLTHGSPVNMSGKWFNVVSYGVRKDDHLLDMDEVARLARENKPKLILAGGTAYSRIWDWKRFREIADEVGAYLMVDMAHIAGLVAGGQHPSPVPHAHVCTTTTHKSLRGPRGGMILTNDADIAKKINSAVFPGLQGGPLMHVIAGKAVAFAEALKPEFKLYAKNVVDNARALAEELKSHGLDIVSGGTDNHLMLVDLRPKNATGKRAEAALGRANITCNKNGIPFDPEKPFVTSGVRLGTPAGTTRGFGVAEFKEIGSLIAEVLDGLKVANSDEGNAAVEQAVKEKVIALTGRFPMYGYQG</sequence>
<gene>
    <name evidence="1" type="primary">glyA</name>
    <name type="ordered locus">BSUIS_A0799</name>
</gene>